<feature type="chain" id="PRO_0000183645" description="Cytochrome c oxidase subunit 2">
    <location>
        <begin position="1"/>
        <end position="230"/>
    </location>
</feature>
<feature type="topological domain" description="Mitochondrial intermembrane" evidence="4">
    <location>
        <begin position="1"/>
        <end position="14"/>
    </location>
</feature>
<feature type="transmembrane region" description="Helical; Name=I" evidence="4">
    <location>
        <begin position="15"/>
        <end position="45"/>
    </location>
</feature>
<feature type="topological domain" description="Mitochondrial matrix" evidence="4">
    <location>
        <begin position="46"/>
        <end position="59"/>
    </location>
</feature>
<feature type="transmembrane region" description="Helical; Name=II" evidence="4">
    <location>
        <begin position="60"/>
        <end position="87"/>
    </location>
</feature>
<feature type="topological domain" description="Mitochondrial intermembrane" evidence="4">
    <location>
        <begin position="88"/>
        <end position="230"/>
    </location>
</feature>
<feature type="binding site" evidence="4">
    <location>
        <position position="161"/>
    </location>
    <ligand>
        <name>Cu cation</name>
        <dbReference type="ChEBI" id="CHEBI:23378"/>
        <label>A1</label>
    </ligand>
</feature>
<feature type="binding site" evidence="4">
    <location>
        <position position="196"/>
    </location>
    <ligand>
        <name>Cu cation</name>
        <dbReference type="ChEBI" id="CHEBI:23378"/>
        <label>A1</label>
    </ligand>
</feature>
<feature type="binding site" evidence="4">
    <location>
        <position position="196"/>
    </location>
    <ligand>
        <name>Cu cation</name>
        <dbReference type="ChEBI" id="CHEBI:23378"/>
        <label>A2</label>
    </ligand>
</feature>
<feature type="binding site" evidence="4">
    <location>
        <position position="198"/>
    </location>
    <ligand>
        <name>Cu cation</name>
        <dbReference type="ChEBI" id="CHEBI:23378"/>
        <label>A2</label>
    </ligand>
</feature>
<feature type="binding site" evidence="4">
    <location>
        <position position="198"/>
    </location>
    <ligand>
        <name>Mg(2+)</name>
        <dbReference type="ChEBI" id="CHEBI:18420"/>
        <note>ligand shared with MT-CO1</note>
    </ligand>
</feature>
<feature type="binding site" evidence="4">
    <location>
        <position position="200"/>
    </location>
    <ligand>
        <name>Cu cation</name>
        <dbReference type="ChEBI" id="CHEBI:23378"/>
        <label>A1</label>
    </ligand>
</feature>
<feature type="binding site" evidence="4">
    <location>
        <position position="200"/>
    </location>
    <ligand>
        <name>Cu cation</name>
        <dbReference type="ChEBI" id="CHEBI:23378"/>
        <label>A2</label>
    </ligand>
</feature>
<feature type="binding site" evidence="4">
    <location>
        <position position="204"/>
    </location>
    <ligand>
        <name>Cu cation</name>
        <dbReference type="ChEBI" id="CHEBI:23378"/>
        <label>A2</label>
    </ligand>
</feature>
<feature type="binding site" evidence="4">
    <location>
        <position position="207"/>
    </location>
    <ligand>
        <name>Cu cation</name>
        <dbReference type="ChEBI" id="CHEBI:23378"/>
        <label>A1</label>
    </ligand>
</feature>
<feature type="modified residue" description="Phosphotyrosine" evidence="2">
    <location>
        <position position="218"/>
    </location>
</feature>
<dbReference type="EC" id="7.1.1.9"/>
<dbReference type="EMBL" id="X83427">
    <property type="protein sequence ID" value="CAA58458.1"/>
    <property type="molecule type" value="Genomic_DNA"/>
</dbReference>
<dbReference type="PIR" id="D58888">
    <property type="entry name" value="D58888"/>
</dbReference>
<dbReference type="RefSeq" id="NP_008046.1">
    <property type="nucleotide sequence ID" value="NC_000891.1"/>
</dbReference>
<dbReference type="SMR" id="Q37718"/>
<dbReference type="FunCoup" id="Q37718">
    <property type="interactions" value="178"/>
</dbReference>
<dbReference type="STRING" id="9258.ENSOANP00000024994"/>
<dbReference type="Ensembl" id="ENSOANT00000028499.1">
    <property type="protein sequence ID" value="ENSOANP00000024994.1"/>
    <property type="gene ID" value="ENSOANG00000019375.1"/>
</dbReference>
<dbReference type="GeneID" id="808709"/>
<dbReference type="KEGG" id="oaa:808709"/>
<dbReference type="CTD" id="4513"/>
<dbReference type="eggNOG" id="KOG4767">
    <property type="taxonomic scope" value="Eukaryota"/>
</dbReference>
<dbReference type="GeneTree" id="ENSGT00390000017410"/>
<dbReference type="HOGENOM" id="CLU_036876_2_3_1"/>
<dbReference type="InParanoid" id="Q37718"/>
<dbReference type="OMA" id="WSYEYTD"/>
<dbReference type="OrthoDB" id="539285at2759"/>
<dbReference type="TreeFam" id="TF344269"/>
<dbReference type="Proteomes" id="UP000002279">
    <property type="component" value="Mitochondrion"/>
</dbReference>
<dbReference type="Bgee" id="ENSOANG00000019375">
    <property type="expression patterns" value="Expressed in cerebellum and 7 other cell types or tissues"/>
</dbReference>
<dbReference type="GO" id="GO:0005743">
    <property type="term" value="C:mitochondrial inner membrane"/>
    <property type="evidence" value="ECO:0007669"/>
    <property type="project" value="UniProtKB-SubCell"/>
</dbReference>
<dbReference type="GO" id="GO:0045277">
    <property type="term" value="C:respiratory chain complex IV"/>
    <property type="evidence" value="ECO:0000250"/>
    <property type="project" value="UniProtKB"/>
</dbReference>
<dbReference type="GO" id="GO:0005507">
    <property type="term" value="F:copper ion binding"/>
    <property type="evidence" value="ECO:0007669"/>
    <property type="project" value="InterPro"/>
</dbReference>
<dbReference type="GO" id="GO:0004129">
    <property type="term" value="F:cytochrome-c oxidase activity"/>
    <property type="evidence" value="ECO:0007669"/>
    <property type="project" value="UniProtKB-EC"/>
</dbReference>
<dbReference type="GO" id="GO:0042773">
    <property type="term" value="P:ATP synthesis coupled electron transport"/>
    <property type="evidence" value="ECO:0000318"/>
    <property type="project" value="GO_Central"/>
</dbReference>
<dbReference type="CDD" id="cd13912">
    <property type="entry name" value="CcO_II_C"/>
    <property type="match status" value="1"/>
</dbReference>
<dbReference type="FunFam" id="1.10.287.90:FF:000001">
    <property type="entry name" value="Cytochrome c oxidase subunit 2"/>
    <property type="match status" value="1"/>
</dbReference>
<dbReference type="FunFam" id="2.60.40.420:FF:000001">
    <property type="entry name" value="Cytochrome c oxidase subunit 2"/>
    <property type="match status" value="1"/>
</dbReference>
<dbReference type="Gene3D" id="1.10.287.90">
    <property type="match status" value="1"/>
</dbReference>
<dbReference type="Gene3D" id="2.60.40.420">
    <property type="entry name" value="Cupredoxins - blue copper proteins"/>
    <property type="match status" value="1"/>
</dbReference>
<dbReference type="InterPro" id="IPR045187">
    <property type="entry name" value="CcO_II"/>
</dbReference>
<dbReference type="InterPro" id="IPR002429">
    <property type="entry name" value="CcO_II-like_C"/>
</dbReference>
<dbReference type="InterPro" id="IPR034210">
    <property type="entry name" value="CcO_II_C"/>
</dbReference>
<dbReference type="InterPro" id="IPR001505">
    <property type="entry name" value="Copper_CuA"/>
</dbReference>
<dbReference type="InterPro" id="IPR008972">
    <property type="entry name" value="Cupredoxin"/>
</dbReference>
<dbReference type="InterPro" id="IPR014222">
    <property type="entry name" value="Cyt_c_oxidase_su2"/>
</dbReference>
<dbReference type="InterPro" id="IPR011759">
    <property type="entry name" value="Cyt_c_oxidase_su2_TM_dom"/>
</dbReference>
<dbReference type="InterPro" id="IPR036257">
    <property type="entry name" value="Cyt_c_oxidase_su2_TM_sf"/>
</dbReference>
<dbReference type="NCBIfam" id="TIGR02866">
    <property type="entry name" value="CoxB"/>
    <property type="match status" value="1"/>
</dbReference>
<dbReference type="PANTHER" id="PTHR22888:SF9">
    <property type="entry name" value="CYTOCHROME C OXIDASE SUBUNIT 2"/>
    <property type="match status" value="1"/>
</dbReference>
<dbReference type="PANTHER" id="PTHR22888">
    <property type="entry name" value="CYTOCHROME C OXIDASE, SUBUNIT II"/>
    <property type="match status" value="1"/>
</dbReference>
<dbReference type="Pfam" id="PF00116">
    <property type="entry name" value="COX2"/>
    <property type="match status" value="1"/>
</dbReference>
<dbReference type="Pfam" id="PF02790">
    <property type="entry name" value="COX2_TM"/>
    <property type="match status" value="1"/>
</dbReference>
<dbReference type="PRINTS" id="PR01166">
    <property type="entry name" value="CYCOXIDASEII"/>
</dbReference>
<dbReference type="SUPFAM" id="SSF49503">
    <property type="entry name" value="Cupredoxins"/>
    <property type="match status" value="1"/>
</dbReference>
<dbReference type="SUPFAM" id="SSF81464">
    <property type="entry name" value="Cytochrome c oxidase subunit II-like, transmembrane region"/>
    <property type="match status" value="1"/>
</dbReference>
<dbReference type="PROSITE" id="PS00078">
    <property type="entry name" value="COX2"/>
    <property type="match status" value="1"/>
</dbReference>
<dbReference type="PROSITE" id="PS50857">
    <property type="entry name" value="COX2_CUA"/>
    <property type="match status" value="1"/>
</dbReference>
<dbReference type="PROSITE" id="PS50999">
    <property type="entry name" value="COX2_TM"/>
    <property type="match status" value="1"/>
</dbReference>
<reference key="1">
    <citation type="journal article" date="1996" name="J. Mol. Evol.">
        <title>The mitochondrial genome of a monotreme--the platypus (Ornithorhynchus anatinus).</title>
        <authorList>
            <person name="Janke A."/>
            <person name="Gemmell N.J."/>
            <person name="Feldmaier-Fuchs G."/>
            <person name="von Haeseler A."/>
            <person name="Paabo S."/>
        </authorList>
    </citation>
    <scope>NUCLEOTIDE SEQUENCE [LARGE SCALE GENOMIC DNA]</scope>
    <source>
        <strain evidence="6">Glennie</strain>
    </source>
</reference>
<geneLocation type="mitochondrion"/>
<comment type="function">
    <text evidence="3">Component of the cytochrome c oxidase, the last enzyme in the mitochondrial electron transport chain which drives oxidative phosphorylation. The respiratory chain contains 3 multisubunit complexes succinate dehydrogenase (complex II, CII), ubiquinol-cytochrome c oxidoreductase (cytochrome b-c1 complex, complex III, CIII) and cytochrome c oxidase (complex IV, CIV), that cooperate to transfer electrons derived from NADH and succinate to molecular oxygen, creating an electrochemical gradient over the inner membrane that drives transmembrane transport and the ATP synthase. Cytochrome c oxidase is the component of the respiratory chain that catalyzes the reduction of oxygen to water. Electrons originating from reduced cytochrome c in the intermembrane space (IMS) are transferred via the dinuclear copper A center (CU(A)) of subunit 2 and heme A of subunit 1 to the active site in subunit 1, a binuclear center (BNC) formed by heme A3 and copper B (CU(B)). The BNC reduces molecular oxygen to 2 water molecules using 4 electrons from cytochrome c in the IMS and 4 protons from the mitochondrial matrix.</text>
</comment>
<comment type="catalytic activity">
    <reaction evidence="3">
        <text>4 Fe(II)-[cytochrome c] + O2 + 8 H(+)(in) = 4 Fe(III)-[cytochrome c] + 2 H2O + 4 H(+)(out)</text>
        <dbReference type="Rhea" id="RHEA:11436"/>
        <dbReference type="Rhea" id="RHEA-COMP:10350"/>
        <dbReference type="Rhea" id="RHEA-COMP:14399"/>
        <dbReference type="ChEBI" id="CHEBI:15377"/>
        <dbReference type="ChEBI" id="CHEBI:15378"/>
        <dbReference type="ChEBI" id="CHEBI:15379"/>
        <dbReference type="ChEBI" id="CHEBI:29033"/>
        <dbReference type="ChEBI" id="CHEBI:29034"/>
        <dbReference type="EC" id="7.1.1.9"/>
    </reaction>
    <physiologicalReaction direction="left-to-right" evidence="3">
        <dbReference type="Rhea" id="RHEA:11437"/>
    </physiologicalReaction>
</comment>
<comment type="cofactor">
    <cofactor evidence="4">
        <name>Cu cation</name>
        <dbReference type="ChEBI" id="CHEBI:23378"/>
    </cofactor>
    <text evidence="4">Binds a dinuclear copper A center per subunit.</text>
</comment>
<comment type="subunit">
    <text evidence="1 4">Component of the cytochrome c oxidase (complex IV, CIV), a multisubunit enzyme composed of 14 subunits. The complex is composed of a catalytic core of 3 subunits MT-CO1, MT-CO2 and MT-CO3, encoded in the mitochondrial DNA, and 11 supernumerary subunits COX4I, COX5A, COX5B, COX6A, COX6B, COX6C, COX7A, COX7B, COX7C, COX8 and NDUFA4, which are encoded in the nuclear genome. The complex exists as a monomer or a dimer and forms supercomplexes (SCs) in the inner mitochondrial membrane with NADH-ubiquinone oxidoreductase (complex I, CI) and ubiquinol-cytochrome c oxidoreductase (cytochrome b-c1 complex, complex III, CIII), resulting in different assemblies (supercomplex SCI(1)III(2)IV(1) and megacomplex MCI(2)III(2)IV(2)) (By similarity). Found in a complex with TMEM177, COA6, COX18, COX20, SCO1 and SCO2. Interacts with TMEM177 in a COX20-dependent manner. Interacts with COX20. Interacts with COX16 (By similarity).</text>
</comment>
<comment type="subcellular location">
    <subcellularLocation>
        <location evidence="4">Mitochondrion inner membrane</location>
        <topology evidence="4">Multi-pass membrane protein</topology>
    </subcellularLocation>
</comment>
<comment type="similarity">
    <text evidence="5">Belongs to the cytochrome c oxidase subunit 2 family.</text>
</comment>
<name>COX2_ORNAN</name>
<organism>
    <name type="scientific">Ornithorhynchus anatinus</name>
    <name type="common">Duckbill platypus</name>
    <dbReference type="NCBI Taxonomy" id="9258"/>
    <lineage>
        <taxon>Eukaryota</taxon>
        <taxon>Metazoa</taxon>
        <taxon>Chordata</taxon>
        <taxon>Craniata</taxon>
        <taxon>Vertebrata</taxon>
        <taxon>Euteleostomi</taxon>
        <taxon>Mammalia</taxon>
        <taxon>Monotremata</taxon>
        <taxon>Ornithorhynchidae</taxon>
        <taxon>Ornithorhynchus</taxon>
    </lineage>
</organism>
<evidence type="ECO:0000250" key="1">
    <source>
        <dbReference type="UniProtKB" id="P00403"/>
    </source>
</evidence>
<evidence type="ECO:0000250" key="2">
    <source>
        <dbReference type="UniProtKB" id="P00406"/>
    </source>
</evidence>
<evidence type="ECO:0000250" key="3">
    <source>
        <dbReference type="UniProtKB" id="P00410"/>
    </source>
</evidence>
<evidence type="ECO:0000250" key="4">
    <source>
        <dbReference type="UniProtKB" id="P68530"/>
    </source>
</evidence>
<evidence type="ECO:0000305" key="5"/>
<evidence type="ECO:0000312" key="6">
    <source>
        <dbReference type="Proteomes" id="UP000002279"/>
    </source>
</evidence>
<proteinExistence type="inferred from homology"/>
<accession>Q37718</accession>
<gene>
    <name type="primary">MT-CO2</name>
    <name type="synonym">COII</name>
    <name type="synonym">COX2</name>
    <name type="synonym">COXII</name>
    <name type="synonym">MTCO2</name>
</gene>
<keyword id="KW-0186">Copper</keyword>
<keyword id="KW-0249">Electron transport</keyword>
<keyword id="KW-0460">Magnesium</keyword>
<keyword id="KW-0472">Membrane</keyword>
<keyword id="KW-0479">Metal-binding</keyword>
<keyword id="KW-0496">Mitochondrion</keyword>
<keyword id="KW-0999">Mitochondrion inner membrane</keyword>
<keyword id="KW-0597">Phosphoprotein</keyword>
<keyword id="KW-1185">Reference proteome</keyword>
<keyword id="KW-0679">Respiratory chain</keyword>
<keyword id="KW-1278">Translocase</keyword>
<keyword id="KW-0812">Transmembrane</keyword>
<keyword id="KW-1133">Transmembrane helix</keyword>
<keyword id="KW-0813">Transport</keyword>
<protein>
    <recommendedName>
        <fullName>Cytochrome c oxidase subunit 2</fullName>
        <ecNumber>7.1.1.9</ecNumber>
    </recommendedName>
    <alternativeName>
        <fullName>Cytochrome c oxidase polypeptide II</fullName>
    </alternativeName>
</protein>
<sequence>MAYPLQLGFQDATSPIMEELLHFHDHTLMIVFLISSLVLYIISTMLTTKLTHTNTMDAQEVETIWTILPAIILILIALPSLRILYMMDEINNPNLTIKTLGHQWYWSYEYSDYEDLSFDSYMIPTQDLLPGQLRLLEVDNHLVLPIELPIRMLISSEDVLHSWALPSMGLKTDAIPGRLNQATITSTRPGLFYGQCSEICGSNHSFMPIVLEMVPLKYFENWTSSMMSTS</sequence>